<accession>Q0BD88</accession>
<feature type="chain" id="PRO_1000017791" description="Methylglyoxal synthase">
    <location>
        <begin position="1"/>
        <end position="130"/>
    </location>
</feature>
<feature type="domain" description="MGS-like" evidence="1">
    <location>
        <begin position="1"/>
        <end position="130"/>
    </location>
</feature>
<feature type="active site" description="Proton donor/acceptor" evidence="1">
    <location>
        <position position="63"/>
    </location>
</feature>
<feature type="binding site" evidence="1">
    <location>
        <position position="11"/>
    </location>
    <ligand>
        <name>substrate</name>
    </ligand>
</feature>
<feature type="binding site" evidence="1">
    <location>
        <position position="15"/>
    </location>
    <ligand>
        <name>substrate</name>
    </ligand>
</feature>
<feature type="binding site" evidence="1">
    <location>
        <begin position="37"/>
        <end position="40"/>
    </location>
    <ligand>
        <name>substrate</name>
    </ligand>
</feature>
<feature type="binding site" evidence="1">
    <location>
        <begin position="57"/>
        <end position="58"/>
    </location>
    <ligand>
        <name>substrate</name>
    </ligand>
</feature>
<feature type="binding site" evidence="1">
    <location>
        <position position="90"/>
    </location>
    <ligand>
        <name>substrate</name>
    </ligand>
</feature>
<name>MGSA_BURCM</name>
<evidence type="ECO:0000255" key="1">
    <source>
        <dbReference type="HAMAP-Rule" id="MF_00549"/>
    </source>
</evidence>
<protein>
    <recommendedName>
        <fullName evidence="1">Methylglyoxal synthase</fullName>
        <shortName evidence="1">MGS</shortName>
        <ecNumber evidence="1">4.2.3.3</ecNumber>
    </recommendedName>
</protein>
<organism>
    <name type="scientific">Burkholderia ambifaria (strain ATCC BAA-244 / DSM 16087 / CCUG 44356 / LMG 19182 / AMMD)</name>
    <name type="common">Burkholderia cepacia (strain AMMD)</name>
    <dbReference type="NCBI Taxonomy" id="339670"/>
    <lineage>
        <taxon>Bacteria</taxon>
        <taxon>Pseudomonadati</taxon>
        <taxon>Pseudomonadota</taxon>
        <taxon>Betaproteobacteria</taxon>
        <taxon>Burkholderiales</taxon>
        <taxon>Burkholderiaceae</taxon>
        <taxon>Burkholderia</taxon>
        <taxon>Burkholderia cepacia complex</taxon>
    </lineage>
</organism>
<gene>
    <name evidence="1" type="primary">mgsA</name>
    <name type="ordered locus">Bamb_2329</name>
</gene>
<dbReference type="EC" id="4.2.3.3" evidence="1"/>
<dbReference type="EMBL" id="CP000440">
    <property type="protein sequence ID" value="ABI87885.1"/>
    <property type="molecule type" value="Genomic_DNA"/>
</dbReference>
<dbReference type="RefSeq" id="WP_006752212.1">
    <property type="nucleotide sequence ID" value="NZ_CP009798.1"/>
</dbReference>
<dbReference type="SMR" id="Q0BD88"/>
<dbReference type="KEGG" id="bam:Bamb_2329"/>
<dbReference type="PATRIC" id="fig|339670.21.peg.2597"/>
<dbReference type="eggNOG" id="COG1803">
    <property type="taxonomic scope" value="Bacteria"/>
</dbReference>
<dbReference type="Proteomes" id="UP000000662">
    <property type="component" value="Chromosome 1"/>
</dbReference>
<dbReference type="GO" id="GO:0005829">
    <property type="term" value="C:cytosol"/>
    <property type="evidence" value="ECO:0007669"/>
    <property type="project" value="TreeGrafter"/>
</dbReference>
<dbReference type="GO" id="GO:0008929">
    <property type="term" value="F:methylglyoxal synthase activity"/>
    <property type="evidence" value="ECO:0007669"/>
    <property type="project" value="UniProtKB-UniRule"/>
</dbReference>
<dbReference type="GO" id="GO:0019242">
    <property type="term" value="P:methylglyoxal biosynthetic process"/>
    <property type="evidence" value="ECO:0007669"/>
    <property type="project" value="UniProtKB-UniRule"/>
</dbReference>
<dbReference type="CDD" id="cd01422">
    <property type="entry name" value="MGS"/>
    <property type="match status" value="1"/>
</dbReference>
<dbReference type="Gene3D" id="3.40.50.1380">
    <property type="entry name" value="Methylglyoxal synthase-like domain"/>
    <property type="match status" value="1"/>
</dbReference>
<dbReference type="HAMAP" id="MF_00549">
    <property type="entry name" value="Methylglyoxal_synth"/>
    <property type="match status" value="1"/>
</dbReference>
<dbReference type="InterPro" id="IPR004363">
    <property type="entry name" value="Methylgl_synth"/>
</dbReference>
<dbReference type="InterPro" id="IPR018148">
    <property type="entry name" value="Methylglyoxal_synth_AS"/>
</dbReference>
<dbReference type="InterPro" id="IPR011607">
    <property type="entry name" value="MGS-like_dom"/>
</dbReference>
<dbReference type="InterPro" id="IPR036914">
    <property type="entry name" value="MGS-like_dom_sf"/>
</dbReference>
<dbReference type="NCBIfam" id="TIGR00160">
    <property type="entry name" value="MGSA"/>
    <property type="match status" value="1"/>
</dbReference>
<dbReference type="NCBIfam" id="NF003559">
    <property type="entry name" value="PRK05234.1"/>
    <property type="match status" value="1"/>
</dbReference>
<dbReference type="PANTHER" id="PTHR30492">
    <property type="entry name" value="METHYLGLYOXAL SYNTHASE"/>
    <property type="match status" value="1"/>
</dbReference>
<dbReference type="PANTHER" id="PTHR30492:SF0">
    <property type="entry name" value="METHYLGLYOXAL SYNTHASE"/>
    <property type="match status" value="1"/>
</dbReference>
<dbReference type="Pfam" id="PF02142">
    <property type="entry name" value="MGS"/>
    <property type="match status" value="1"/>
</dbReference>
<dbReference type="PIRSF" id="PIRSF006614">
    <property type="entry name" value="Methylglyox_syn"/>
    <property type="match status" value="1"/>
</dbReference>
<dbReference type="SMART" id="SM00851">
    <property type="entry name" value="MGS"/>
    <property type="match status" value="1"/>
</dbReference>
<dbReference type="SUPFAM" id="SSF52335">
    <property type="entry name" value="Methylglyoxal synthase-like"/>
    <property type="match status" value="1"/>
</dbReference>
<dbReference type="PROSITE" id="PS01335">
    <property type="entry name" value="METHYLGLYOXAL_SYNTH"/>
    <property type="match status" value="1"/>
</dbReference>
<dbReference type="PROSITE" id="PS51855">
    <property type="entry name" value="MGS"/>
    <property type="match status" value="1"/>
</dbReference>
<keyword id="KW-0456">Lyase</keyword>
<reference key="1">
    <citation type="submission" date="2006-08" db="EMBL/GenBank/DDBJ databases">
        <title>Complete sequence of chromosome 1 of Burkholderia cepacia AMMD.</title>
        <authorList>
            <person name="Copeland A."/>
            <person name="Lucas S."/>
            <person name="Lapidus A."/>
            <person name="Barry K."/>
            <person name="Detter J.C."/>
            <person name="Glavina del Rio T."/>
            <person name="Hammon N."/>
            <person name="Israni S."/>
            <person name="Pitluck S."/>
            <person name="Bruce D."/>
            <person name="Chain P."/>
            <person name="Malfatti S."/>
            <person name="Shin M."/>
            <person name="Vergez L."/>
            <person name="Schmutz J."/>
            <person name="Larimer F."/>
            <person name="Land M."/>
            <person name="Hauser L."/>
            <person name="Kyrpides N."/>
            <person name="Kim E."/>
            <person name="Parke J."/>
            <person name="Coenye T."/>
            <person name="Konstantinidis K."/>
            <person name="Ramette A."/>
            <person name="Tiedje J."/>
            <person name="Richardson P."/>
        </authorList>
    </citation>
    <scope>NUCLEOTIDE SEQUENCE [LARGE SCALE GENOMIC DNA]</scope>
    <source>
        <strain>ATCC BAA-244 / DSM 16087 / CCUG 44356 / LMG 19182 / AMMD</strain>
    </source>
</reference>
<proteinExistence type="inferred from homology"/>
<sequence length="130" mass="13849">MSKPRIALIAHDAKKDDIVALTGQFRETLAQCRLVATGTTGGRIAAAHGLEVERKLSGPLGGDLQIGAELADGRVDIVVFLRDPMTAQPHDPDITALVRACDVHDVPVATNVATARMLLDDLARNMQDVC</sequence>
<comment type="function">
    <text evidence="1">Catalyzes the formation of methylglyoxal from dihydroxyacetone phosphate.</text>
</comment>
<comment type="catalytic activity">
    <reaction evidence="1">
        <text>dihydroxyacetone phosphate = methylglyoxal + phosphate</text>
        <dbReference type="Rhea" id="RHEA:17937"/>
        <dbReference type="ChEBI" id="CHEBI:17158"/>
        <dbReference type="ChEBI" id="CHEBI:43474"/>
        <dbReference type="ChEBI" id="CHEBI:57642"/>
        <dbReference type="EC" id="4.2.3.3"/>
    </reaction>
</comment>
<comment type="similarity">
    <text evidence="1">Belongs to the methylglyoxal synthase family.</text>
</comment>